<evidence type="ECO:0000250" key="1">
    <source>
        <dbReference type="UniProtKB" id="M1EBB2"/>
    </source>
</evidence>
<evidence type="ECO:0000305" key="2"/>
<evidence type="ECO:0000305" key="3">
    <source>
    </source>
</evidence>
<feature type="chain" id="PRO_0000165034" description="Receptor-recognizing protein gp38">
    <location>
        <begin position="1"/>
        <end position="262"/>
    </location>
</feature>
<feature type="short sequence motif" description="GRM 1" evidence="1">
    <location>
        <begin position="115"/>
        <end position="122"/>
    </location>
</feature>
<feature type="short sequence motif" description="GRM 2" evidence="1">
    <location>
        <begin position="124"/>
        <end position="131"/>
    </location>
</feature>
<feature type="short sequence motif" description="GRM 3" evidence="1">
    <location>
        <begin position="151"/>
        <end position="164"/>
    </location>
</feature>
<feature type="short sequence motif" description="GRM 4" evidence="1">
    <location>
        <begin position="167"/>
        <end position="180"/>
    </location>
</feature>
<feature type="short sequence motif" description="GRM 5" evidence="1">
    <location>
        <begin position="183"/>
        <end position="187"/>
    </location>
</feature>
<feature type="short sequence motif" description="GRM 6" evidence="1">
    <location>
        <begin position="188"/>
        <end position="194"/>
    </location>
</feature>
<feature type="short sequence motif" description="GRM 7" evidence="1">
    <location>
        <begin position="200"/>
        <end position="207"/>
    </location>
</feature>
<feature type="short sequence motif" description="GRM 8" evidence="1">
    <location>
        <begin position="213"/>
        <end position="219"/>
    </location>
</feature>
<feature type="short sequence motif" description="GRM 9" evidence="1">
    <location>
        <begin position="222"/>
        <end position="227"/>
    </location>
</feature>
<feature type="short sequence motif" description="GRM 10" evidence="1">
    <location>
        <begin position="231"/>
        <end position="242"/>
    </location>
</feature>
<feature type="site" description="Interaction with the fiber protein p37" evidence="1">
    <location>
        <position position="9"/>
    </location>
</feature>
<feature type="site" description="Interaction with the fiber protein p37" evidence="1">
    <location>
        <position position="22"/>
    </location>
</feature>
<feature type="site" description="Interaction with the fiber protein p37" evidence="1">
    <location>
        <position position="37"/>
    </location>
</feature>
<reference key="1">
    <citation type="journal article" date="1987" name="J. Mol. Biol.">
        <title>Receptor-recognizing proteins of T-even type bacteriophages. Constant and hypervariable regions and an unusual case of evolution.</title>
        <authorList>
            <person name="Montag D."/>
            <person name="Riede I."/>
            <person name="Eschbach M.-L."/>
            <person name="Degen M."/>
            <person name="Henning U."/>
        </authorList>
    </citation>
    <scope>NUCLEOTIDE SEQUENCE [GENOMIC DNA]</scope>
</reference>
<reference key="2">
    <citation type="journal article" date="1994" name="J. Mol. Biol.">
        <title>Alterations of receptor specificities of coliphages of the T2 family.</title>
        <authorList>
            <person name="Hashemolhosseini S."/>
            <person name="Holmes Z."/>
            <person name="Mutschler B."/>
            <person name="Henning U."/>
        </authorList>
    </citation>
    <scope>FUNCTION</scope>
</reference>
<gene>
    <name type="primary">38</name>
</gene>
<protein>
    <recommendedName>
        <fullName evidence="1">Receptor-recognizing protein gp38</fullName>
    </recommendedName>
    <alternativeName>
        <fullName>Gene product 38</fullName>
        <shortName evidence="1">gp38</shortName>
    </alternativeName>
    <alternativeName>
        <fullName evidence="1">Long tail fiber adhesin</fullName>
    </alternativeName>
</protein>
<organism>
    <name type="scientific">Enterobacteria phage M1</name>
    <name type="common">Bacteriophage M1</name>
    <dbReference type="NCBI Taxonomy" id="10676"/>
    <lineage>
        <taxon>Viruses</taxon>
        <taxon>Duplodnaviria</taxon>
        <taxon>Heunggongvirae</taxon>
        <taxon>Uroviricota</taxon>
        <taxon>Caudoviricetes</taxon>
        <taxon>Straboviridae</taxon>
        <taxon>Tevenvirinae</taxon>
        <taxon>Tequatrovirus</taxon>
    </lineage>
</organism>
<sequence length="262" mass="26291">MAVVGVPGWIGSSAANETGQRWMSQAAGQLRLGVPCWMSQFAGRSREIIHTLGADHNFNGQWFRDRCFEAGSAPIVFNITGDLVSYSKDVPLFFMYGDTPNEYVQLNIHGVTMYGRGGNGGSNSPGSAGGHCIQNNIGGRLRINNGGAIAGGGGGGGGGYWNASITRYRYRYVVGGGGGRPFGAAGGYSGGSASTAGTLTGAGIGSKPGNAIYGGNGGNVGSAGGAFGGISGSRYGGGAAGYAVIGSAPTWQNVGAIYGPRV</sequence>
<name>RBP_BPM1</name>
<organismHost>
    <name type="scientific">Selenomonas ruminantium</name>
    <dbReference type="NCBI Taxonomy" id="971"/>
</organismHost>
<keyword id="KW-0945">Host-virus interaction</keyword>
<keyword id="KW-1161">Viral attachment to host cell</keyword>
<keyword id="KW-1230">Viral tail fiber protein</keyword>
<keyword id="KW-1227">Viral tail protein</keyword>
<keyword id="KW-0946">Virion</keyword>
<keyword id="KW-1160">Virus entry into host cell</keyword>
<dbReference type="EMBL" id="X05676">
    <property type="protein sequence ID" value="CAA29161.1"/>
    <property type="molecule type" value="Genomic_DNA"/>
</dbReference>
<dbReference type="PIR" id="JS0287">
    <property type="entry name" value="TLBPM1"/>
</dbReference>
<dbReference type="SMR" id="P08234"/>
<dbReference type="GO" id="GO:0098024">
    <property type="term" value="C:virus tail, fiber"/>
    <property type="evidence" value="ECO:0007669"/>
    <property type="project" value="UniProtKB-KW"/>
</dbReference>
<dbReference type="GO" id="GO:0098671">
    <property type="term" value="P:adhesion receptor-mediated virion attachment to host cell"/>
    <property type="evidence" value="ECO:0000314"/>
    <property type="project" value="UniProtKB"/>
</dbReference>
<dbReference type="GO" id="GO:0046718">
    <property type="term" value="P:symbiont entry into host cell"/>
    <property type="evidence" value="ECO:0007669"/>
    <property type="project" value="UniProtKB-KW"/>
</dbReference>
<dbReference type="InterPro" id="IPR048291">
    <property type="entry name" value="Gp38_N"/>
</dbReference>
<dbReference type="InterPro" id="IPR007932">
    <property type="entry name" value="Receptor-recog_Gp38"/>
</dbReference>
<dbReference type="Pfam" id="PF05268">
    <property type="entry name" value="GP38"/>
    <property type="match status" value="1"/>
</dbReference>
<dbReference type="Pfam" id="PF21721">
    <property type="entry name" value="Gp38_N"/>
    <property type="match status" value="1"/>
</dbReference>
<comment type="function">
    <text evidence="1 3">Receptor binding protein (RBP) that is at the tip of the long tail fibers and serves as the phage recognition site for the attachment host receptor (By similarity). Probably uses the host receptor OmpA (Probable).</text>
</comment>
<comment type="subcellular location">
    <subcellularLocation>
        <location evidence="1">Virion</location>
    </subcellularLocation>
    <text evidence="1">Forms the distal tip of the long tail fiber.</text>
</comment>
<comment type="domain">
    <text evidence="1">The N-terminus is involved in binding to the fiber protein p37. The C-terminus contains glycine-rich motifs (GRM) and mediates the host specificity. The glycine-rich motifs assemble into a 3-layered PG(II) sandwich domain.</text>
</comment>
<comment type="miscellaneous">
    <text>This phage use outer membrane protein ompA as a receptor.</text>
</comment>
<comment type="similarity">
    <text evidence="2">Belongs to the receptor-recognizing protein gp38 family.</text>
</comment>
<accession>P08234</accession>
<proteinExistence type="inferred from homology"/>